<comment type="function">
    <text evidence="1">Displays ATPase and GTPase activities.</text>
</comment>
<comment type="similarity">
    <text evidence="1">Belongs to the RapZ-like family.</text>
</comment>
<keyword id="KW-0067">ATP-binding</keyword>
<keyword id="KW-0342">GTP-binding</keyword>
<keyword id="KW-0547">Nucleotide-binding</keyword>
<keyword id="KW-1185">Reference proteome</keyword>
<sequence length="283" mass="32294">MKLVIVSGRSGSGKSVALRVLEDLGYYCVDNLPLQLIGPLLAQLKGNNDKVAISIDIRNMPEQEKALEKELARLPEGVELTSFFLNSSDKVLLKRYSETRRLHPLSRSKVSLQEAIKLEGKMLAPISNMVDHFIDTSNLNVYELADAVRQILLGRTDKELVIIFESFGFKHGMPTEADFMFDARFLPNPHWEPELRPLTGLDEPVKLFLERQVLVNKYIWQIENLLETWLPHLERNNRSYLTIAIGCTGGQHRSVYIAEQLAKRFANSHHKVEARHRELNAKA</sequence>
<proteinExistence type="inferred from homology"/>
<protein>
    <recommendedName>
        <fullName evidence="1">Nucleotide-binding protein Sama_3091</fullName>
    </recommendedName>
</protein>
<evidence type="ECO:0000255" key="1">
    <source>
        <dbReference type="HAMAP-Rule" id="MF_00636"/>
    </source>
</evidence>
<feature type="chain" id="PRO_1000056851" description="Nucleotide-binding protein Sama_3091">
    <location>
        <begin position="1"/>
        <end position="283"/>
    </location>
</feature>
<feature type="binding site" evidence="1">
    <location>
        <begin position="8"/>
        <end position="15"/>
    </location>
    <ligand>
        <name>ATP</name>
        <dbReference type="ChEBI" id="CHEBI:30616"/>
    </ligand>
</feature>
<feature type="binding site" evidence="1">
    <location>
        <begin position="56"/>
        <end position="59"/>
    </location>
    <ligand>
        <name>GTP</name>
        <dbReference type="ChEBI" id="CHEBI:37565"/>
    </ligand>
</feature>
<name>Y3091_SHEAM</name>
<dbReference type="EMBL" id="CP000507">
    <property type="protein sequence ID" value="ABM01294.1"/>
    <property type="molecule type" value="Genomic_DNA"/>
</dbReference>
<dbReference type="RefSeq" id="WP_011761198.1">
    <property type="nucleotide sequence ID" value="NC_008700.1"/>
</dbReference>
<dbReference type="SMR" id="A1SA87"/>
<dbReference type="STRING" id="326297.Sama_3091"/>
<dbReference type="KEGG" id="saz:Sama_3091"/>
<dbReference type="eggNOG" id="COG1660">
    <property type="taxonomic scope" value="Bacteria"/>
</dbReference>
<dbReference type="HOGENOM" id="CLU_059558_1_1_6"/>
<dbReference type="OrthoDB" id="9784461at2"/>
<dbReference type="Proteomes" id="UP000009175">
    <property type="component" value="Chromosome"/>
</dbReference>
<dbReference type="GO" id="GO:0005524">
    <property type="term" value="F:ATP binding"/>
    <property type="evidence" value="ECO:0007669"/>
    <property type="project" value="UniProtKB-UniRule"/>
</dbReference>
<dbReference type="GO" id="GO:0005525">
    <property type="term" value="F:GTP binding"/>
    <property type="evidence" value="ECO:0007669"/>
    <property type="project" value="UniProtKB-UniRule"/>
</dbReference>
<dbReference type="Gene3D" id="3.40.50.300">
    <property type="entry name" value="P-loop containing nucleotide triphosphate hydrolases"/>
    <property type="match status" value="1"/>
</dbReference>
<dbReference type="HAMAP" id="MF_00636">
    <property type="entry name" value="RapZ_like"/>
    <property type="match status" value="1"/>
</dbReference>
<dbReference type="InterPro" id="IPR027417">
    <property type="entry name" value="P-loop_NTPase"/>
</dbReference>
<dbReference type="InterPro" id="IPR005337">
    <property type="entry name" value="RapZ-like"/>
</dbReference>
<dbReference type="InterPro" id="IPR053930">
    <property type="entry name" value="RapZ-like_N"/>
</dbReference>
<dbReference type="InterPro" id="IPR053931">
    <property type="entry name" value="RapZ_C"/>
</dbReference>
<dbReference type="NCBIfam" id="NF003828">
    <property type="entry name" value="PRK05416.1"/>
    <property type="match status" value="1"/>
</dbReference>
<dbReference type="PANTHER" id="PTHR30448">
    <property type="entry name" value="RNASE ADAPTER PROTEIN RAPZ"/>
    <property type="match status" value="1"/>
</dbReference>
<dbReference type="PANTHER" id="PTHR30448:SF0">
    <property type="entry name" value="RNASE ADAPTER PROTEIN RAPZ"/>
    <property type="match status" value="1"/>
</dbReference>
<dbReference type="Pfam" id="PF22740">
    <property type="entry name" value="PapZ_C"/>
    <property type="match status" value="1"/>
</dbReference>
<dbReference type="Pfam" id="PF03668">
    <property type="entry name" value="RapZ-like_N"/>
    <property type="match status" value="1"/>
</dbReference>
<dbReference type="PIRSF" id="PIRSF005052">
    <property type="entry name" value="P-loopkin"/>
    <property type="match status" value="1"/>
</dbReference>
<dbReference type="SUPFAM" id="SSF52540">
    <property type="entry name" value="P-loop containing nucleoside triphosphate hydrolases"/>
    <property type="match status" value="1"/>
</dbReference>
<reference key="1">
    <citation type="submission" date="2006-12" db="EMBL/GenBank/DDBJ databases">
        <title>Complete sequence of Shewanella amazonensis SB2B.</title>
        <authorList>
            <consortium name="US DOE Joint Genome Institute"/>
            <person name="Copeland A."/>
            <person name="Lucas S."/>
            <person name="Lapidus A."/>
            <person name="Barry K."/>
            <person name="Detter J.C."/>
            <person name="Glavina del Rio T."/>
            <person name="Hammon N."/>
            <person name="Israni S."/>
            <person name="Dalin E."/>
            <person name="Tice H."/>
            <person name="Pitluck S."/>
            <person name="Munk A.C."/>
            <person name="Brettin T."/>
            <person name="Bruce D."/>
            <person name="Han C."/>
            <person name="Tapia R."/>
            <person name="Gilna P."/>
            <person name="Schmutz J."/>
            <person name="Larimer F."/>
            <person name="Land M."/>
            <person name="Hauser L."/>
            <person name="Kyrpides N."/>
            <person name="Mikhailova N."/>
            <person name="Fredrickson J."/>
            <person name="Richardson P."/>
        </authorList>
    </citation>
    <scope>NUCLEOTIDE SEQUENCE [LARGE SCALE GENOMIC DNA]</scope>
    <source>
        <strain>ATCC BAA-1098 / SB2B</strain>
    </source>
</reference>
<gene>
    <name type="ordered locus">Sama_3091</name>
</gene>
<organism>
    <name type="scientific">Shewanella amazonensis (strain ATCC BAA-1098 / SB2B)</name>
    <dbReference type="NCBI Taxonomy" id="326297"/>
    <lineage>
        <taxon>Bacteria</taxon>
        <taxon>Pseudomonadati</taxon>
        <taxon>Pseudomonadota</taxon>
        <taxon>Gammaproteobacteria</taxon>
        <taxon>Alteromonadales</taxon>
        <taxon>Shewanellaceae</taxon>
        <taxon>Shewanella</taxon>
    </lineage>
</organism>
<accession>A1SA87</accession>